<gene>
    <name evidence="1" type="primary">xni</name>
    <name evidence="1" type="synonym">ygdG</name>
    <name type="ordered locus">YPTS_3135</name>
</gene>
<organism>
    <name type="scientific">Yersinia pseudotuberculosis serotype IB (strain PB1/+)</name>
    <dbReference type="NCBI Taxonomy" id="502801"/>
    <lineage>
        <taxon>Bacteria</taxon>
        <taxon>Pseudomonadati</taxon>
        <taxon>Pseudomonadota</taxon>
        <taxon>Gammaproteobacteria</taxon>
        <taxon>Enterobacterales</taxon>
        <taxon>Yersiniaceae</taxon>
        <taxon>Yersinia</taxon>
    </lineage>
</organism>
<accession>B2JZ46</accession>
<reference key="1">
    <citation type="submission" date="2008-04" db="EMBL/GenBank/DDBJ databases">
        <title>Complete sequence of Yersinia pseudotuberculosis PB1/+.</title>
        <authorList>
            <person name="Copeland A."/>
            <person name="Lucas S."/>
            <person name="Lapidus A."/>
            <person name="Glavina del Rio T."/>
            <person name="Dalin E."/>
            <person name="Tice H."/>
            <person name="Bruce D."/>
            <person name="Goodwin L."/>
            <person name="Pitluck S."/>
            <person name="Munk A.C."/>
            <person name="Brettin T."/>
            <person name="Detter J.C."/>
            <person name="Han C."/>
            <person name="Tapia R."/>
            <person name="Schmutz J."/>
            <person name="Larimer F."/>
            <person name="Land M."/>
            <person name="Hauser L."/>
            <person name="Challacombe J.F."/>
            <person name="Green L."/>
            <person name="Lindler L.E."/>
            <person name="Nikolich M.P."/>
            <person name="Richardson P."/>
        </authorList>
    </citation>
    <scope>NUCLEOTIDE SEQUENCE [LARGE SCALE GENOMIC DNA]</scope>
    <source>
        <strain>PB1/+</strain>
    </source>
</reference>
<sequence>MQIHLLIVDALNLIRRIHAVQGSPCVKACQHALQQLIQHSQPSHAVAVFDEDDRSDSWRHQCLPDYKAGRSPMPDNLQQEMPLIRQAFNELGVACWHSPGNEADDLAATLVVKVAGAGHQVTIVSTDKGYCQLLAPNVQIRDYFQKRWLDMPFVKQEFGVLPRQLPDYWGLAGISSSKIPGVAGVGAKTATLLLQQADTLEVLYQNLESIPEKWRKKLQQHQQMAFTCKQIATLKTDLLLSGNLQQLRLKK</sequence>
<feature type="chain" id="PRO_1000138398" description="Flap endonuclease Xni">
    <location>
        <begin position="1"/>
        <end position="251"/>
    </location>
</feature>
<feature type="domain" description="5'-3' exonuclease" evidence="1">
    <location>
        <begin position="160"/>
        <end position="250"/>
    </location>
</feature>
<feature type="region of interest" description="Interaction with DNA" evidence="1">
    <location>
        <begin position="184"/>
        <end position="189"/>
    </location>
</feature>
<feature type="binding site" evidence="1">
    <location>
        <position position="104"/>
    </location>
    <ligand>
        <name>Mg(2+)</name>
        <dbReference type="ChEBI" id="CHEBI:18420"/>
    </ligand>
</feature>
<feature type="binding site" evidence="1">
    <location>
        <position position="171"/>
    </location>
    <ligand>
        <name>K(+)</name>
        <dbReference type="ChEBI" id="CHEBI:29103"/>
    </ligand>
</feature>
<feature type="binding site" evidence="1">
    <location>
        <position position="172"/>
    </location>
    <ligand>
        <name>K(+)</name>
        <dbReference type="ChEBI" id="CHEBI:29103"/>
    </ligand>
</feature>
<feature type="binding site" evidence="1">
    <location>
        <position position="180"/>
    </location>
    <ligand>
        <name>K(+)</name>
        <dbReference type="ChEBI" id="CHEBI:29103"/>
    </ligand>
</feature>
<feature type="binding site" evidence="1">
    <location>
        <position position="182"/>
    </location>
    <ligand>
        <name>K(+)</name>
        <dbReference type="ChEBI" id="CHEBI:29103"/>
    </ligand>
</feature>
<feature type="binding site" evidence="1">
    <location>
        <position position="185"/>
    </location>
    <ligand>
        <name>K(+)</name>
        <dbReference type="ChEBI" id="CHEBI:29103"/>
    </ligand>
</feature>
<proteinExistence type="inferred from homology"/>
<dbReference type="EC" id="3.1.-.-" evidence="1"/>
<dbReference type="EMBL" id="CP001048">
    <property type="protein sequence ID" value="ACC90090.1"/>
    <property type="molecule type" value="Genomic_DNA"/>
</dbReference>
<dbReference type="RefSeq" id="WP_011192868.1">
    <property type="nucleotide sequence ID" value="NZ_CP009780.1"/>
</dbReference>
<dbReference type="SMR" id="B2JZ46"/>
<dbReference type="GeneID" id="49784967"/>
<dbReference type="KEGG" id="ypb:YPTS_3135"/>
<dbReference type="PATRIC" id="fig|502801.10.peg.2567"/>
<dbReference type="GO" id="GO:0008409">
    <property type="term" value="F:5'-3' exonuclease activity"/>
    <property type="evidence" value="ECO:0007669"/>
    <property type="project" value="InterPro"/>
</dbReference>
<dbReference type="GO" id="GO:0017108">
    <property type="term" value="F:5'-flap endonuclease activity"/>
    <property type="evidence" value="ECO:0007669"/>
    <property type="project" value="UniProtKB-UniRule"/>
</dbReference>
<dbReference type="GO" id="GO:0003677">
    <property type="term" value="F:DNA binding"/>
    <property type="evidence" value="ECO:0007669"/>
    <property type="project" value="UniProtKB-UniRule"/>
</dbReference>
<dbReference type="GO" id="GO:0000287">
    <property type="term" value="F:magnesium ion binding"/>
    <property type="evidence" value="ECO:0007669"/>
    <property type="project" value="UniProtKB-UniRule"/>
</dbReference>
<dbReference type="GO" id="GO:0030955">
    <property type="term" value="F:potassium ion binding"/>
    <property type="evidence" value="ECO:0007669"/>
    <property type="project" value="UniProtKB-UniRule"/>
</dbReference>
<dbReference type="GO" id="GO:0033567">
    <property type="term" value="P:DNA replication, Okazaki fragment processing"/>
    <property type="evidence" value="ECO:0007669"/>
    <property type="project" value="UniProtKB-UniRule"/>
</dbReference>
<dbReference type="CDD" id="cd09898">
    <property type="entry name" value="H3TH_53EXO"/>
    <property type="match status" value="1"/>
</dbReference>
<dbReference type="CDD" id="cd09859">
    <property type="entry name" value="PIN_53EXO"/>
    <property type="match status" value="1"/>
</dbReference>
<dbReference type="FunFam" id="1.10.150.20:FF:000003">
    <property type="entry name" value="DNA polymerase I"/>
    <property type="match status" value="1"/>
</dbReference>
<dbReference type="FunFam" id="3.40.50.1010:FF:000011">
    <property type="entry name" value="Flap endonuclease Xni"/>
    <property type="match status" value="1"/>
</dbReference>
<dbReference type="Gene3D" id="1.10.150.20">
    <property type="entry name" value="5' to 3' exonuclease, C-terminal subdomain"/>
    <property type="match status" value="1"/>
</dbReference>
<dbReference type="Gene3D" id="3.40.50.1010">
    <property type="entry name" value="5'-nuclease"/>
    <property type="match status" value="1"/>
</dbReference>
<dbReference type="HAMAP" id="MF_01192">
    <property type="entry name" value="Xni"/>
    <property type="match status" value="1"/>
</dbReference>
<dbReference type="InterPro" id="IPR020046">
    <property type="entry name" value="5-3_exonucl_a-hlix_arch_N"/>
</dbReference>
<dbReference type="InterPro" id="IPR002421">
    <property type="entry name" value="5-3_exonuclease"/>
</dbReference>
<dbReference type="InterPro" id="IPR036279">
    <property type="entry name" value="5-3_exonuclease_C_sf"/>
</dbReference>
<dbReference type="InterPro" id="IPR020045">
    <property type="entry name" value="DNA_polI_H3TH"/>
</dbReference>
<dbReference type="InterPro" id="IPR038969">
    <property type="entry name" value="FEN"/>
</dbReference>
<dbReference type="InterPro" id="IPR008918">
    <property type="entry name" value="HhH2"/>
</dbReference>
<dbReference type="InterPro" id="IPR029060">
    <property type="entry name" value="PIN-like_dom_sf"/>
</dbReference>
<dbReference type="InterPro" id="IPR022895">
    <property type="entry name" value="Xni"/>
</dbReference>
<dbReference type="NCBIfam" id="NF007017">
    <property type="entry name" value="PRK09482.1"/>
    <property type="match status" value="1"/>
</dbReference>
<dbReference type="PANTHER" id="PTHR42646:SF2">
    <property type="entry name" value="5'-3' EXONUCLEASE FAMILY PROTEIN"/>
    <property type="match status" value="1"/>
</dbReference>
<dbReference type="PANTHER" id="PTHR42646">
    <property type="entry name" value="FLAP ENDONUCLEASE XNI"/>
    <property type="match status" value="1"/>
</dbReference>
<dbReference type="Pfam" id="PF01367">
    <property type="entry name" value="5_3_exonuc"/>
    <property type="match status" value="1"/>
</dbReference>
<dbReference type="Pfam" id="PF02739">
    <property type="entry name" value="5_3_exonuc_N"/>
    <property type="match status" value="1"/>
</dbReference>
<dbReference type="SMART" id="SM00475">
    <property type="entry name" value="53EXOc"/>
    <property type="match status" value="1"/>
</dbReference>
<dbReference type="SMART" id="SM00279">
    <property type="entry name" value="HhH2"/>
    <property type="match status" value="1"/>
</dbReference>
<dbReference type="SUPFAM" id="SSF47807">
    <property type="entry name" value="5' to 3' exonuclease, C-terminal subdomain"/>
    <property type="match status" value="1"/>
</dbReference>
<dbReference type="SUPFAM" id="SSF88723">
    <property type="entry name" value="PIN domain-like"/>
    <property type="match status" value="1"/>
</dbReference>
<evidence type="ECO:0000255" key="1">
    <source>
        <dbReference type="HAMAP-Rule" id="MF_01192"/>
    </source>
</evidence>
<keyword id="KW-0238">DNA-binding</keyword>
<keyword id="KW-0255">Endonuclease</keyword>
<keyword id="KW-0378">Hydrolase</keyword>
<keyword id="KW-0460">Magnesium</keyword>
<keyword id="KW-0479">Metal-binding</keyword>
<keyword id="KW-0540">Nuclease</keyword>
<keyword id="KW-0630">Potassium</keyword>
<protein>
    <recommendedName>
        <fullName evidence="1">Flap endonuclease Xni</fullName>
        <shortName evidence="1">FEN</shortName>
        <ecNumber evidence="1">3.1.-.-</ecNumber>
    </recommendedName>
</protein>
<name>XNI_YERPB</name>
<comment type="function">
    <text evidence="1">Has flap endonuclease activity. During DNA replication, flap endonucleases cleave the 5'-overhanging flap structure that is generated by displacement synthesis when DNA polymerase encounters the 5'-end of a downstream Okazaki fragment.</text>
</comment>
<comment type="cofactor">
    <cofactor evidence="1">
        <name>Mg(2+)</name>
        <dbReference type="ChEBI" id="CHEBI:18420"/>
    </cofactor>
    <text evidence="1">Binds 2 Mg(2+) per subunit. Only one magnesium ion has a direct interaction with the protein, the other interactions are indirect.</text>
</comment>
<comment type="cofactor">
    <cofactor evidence="1">
        <name>K(+)</name>
        <dbReference type="ChEBI" id="CHEBI:29103"/>
    </cofactor>
    <text evidence="1">Binds 1 K(+) per subunit. The potassium ion strongly increases the affinity for DNA.</text>
</comment>
<comment type="similarity">
    <text evidence="1">Belongs to the Xni family.</text>
</comment>